<protein>
    <recommendedName>
        <fullName evidence="1">UPF0182 protein MRA_0066</fullName>
    </recommendedName>
</protein>
<name>Y066_MYCTA</name>
<comment type="subcellular location">
    <subcellularLocation>
        <location evidence="1">Cell membrane</location>
        <topology evidence="1">Multi-pass membrane protein</topology>
    </subcellularLocation>
</comment>
<comment type="similarity">
    <text evidence="1">Belongs to the UPF0182 family.</text>
</comment>
<reference key="1">
    <citation type="journal article" date="2008" name="PLoS ONE">
        <title>Genetic basis of virulence attenuation revealed by comparative genomic analysis of Mycobacterium tuberculosis strain H37Ra versus H37Rv.</title>
        <authorList>
            <person name="Zheng H."/>
            <person name="Lu L."/>
            <person name="Wang B."/>
            <person name="Pu S."/>
            <person name="Zhang X."/>
            <person name="Zhu G."/>
            <person name="Shi W."/>
            <person name="Zhang L."/>
            <person name="Wang H."/>
            <person name="Wang S."/>
            <person name="Zhao G."/>
            <person name="Zhang Y."/>
        </authorList>
    </citation>
    <scope>NUCLEOTIDE SEQUENCE [LARGE SCALE GENOMIC DNA]</scope>
    <source>
        <strain>ATCC 25177 / H37Ra</strain>
    </source>
</reference>
<gene>
    <name type="ordered locus">MRA_0066</name>
</gene>
<organism>
    <name type="scientific">Mycobacterium tuberculosis (strain ATCC 25177 / H37Ra)</name>
    <dbReference type="NCBI Taxonomy" id="419947"/>
    <lineage>
        <taxon>Bacteria</taxon>
        <taxon>Bacillati</taxon>
        <taxon>Actinomycetota</taxon>
        <taxon>Actinomycetes</taxon>
        <taxon>Mycobacteriales</taxon>
        <taxon>Mycobacteriaceae</taxon>
        <taxon>Mycobacterium</taxon>
        <taxon>Mycobacterium tuberculosis complex</taxon>
    </lineage>
</organism>
<proteinExistence type="inferred from homology"/>
<keyword id="KW-1003">Cell membrane</keyword>
<keyword id="KW-0472">Membrane</keyword>
<keyword id="KW-1185">Reference proteome</keyword>
<keyword id="KW-0812">Transmembrane</keyword>
<keyword id="KW-1133">Transmembrane helix</keyword>
<dbReference type="EMBL" id="CP000611">
    <property type="protein sequence ID" value="ABQ71785.1"/>
    <property type="molecule type" value="Genomic_DNA"/>
</dbReference>
<dbReference type="RefSeq" id="WP_009937016.1">
    <property type="nucleotide sequence ID" value="NZ_CP016972.1"/>
</dbReference>
<dbReference type="SMR" id="A5TYD5"/>
<dbReference type="KEGG" id="mra:MRA_0066"/>
<dbReference type="eggNOG" id="COG1615">
    <property type="taxonomic scope" value="Bacteria"/>
</dbReference>
<dbReference type="HOGENOM" id="CLU_007733_1_0_11"/>
<dbReference type="Proteomes" id="UP000001988">
    <property type="component" value="Chromosome"/>
</dbReference>
<dbReference type="GO" id="GO:0005576">
    <property type="term" value="C:extracellular region"/>
    <property type="evidence" value="ECO:0007669"/>
    <property type="project" value="TreeGrafter"/>
</dbReference>
<dbReference type="GO" id="GO:0005886">
    <property type="term" value="C:plasma membrane"/>
    <property type="evidence" value="ECO:0007669"/>
    <property type="project" value="UniProtKB-SubCell"/>
</dbReference>
<dbReference type="HAMAP" id="MF_01600">
    <property type="entry name" value="UPF0182"/>
    <property type="match status" value="1"/>
</dbReference>
<dbReference type="InterPro" id="IPR005372">
    <property type="entry name" value="UPF0182"/>
</dbReference>
<dbReference type="NCBIfam" id="NF000825">
    <property type="entry name" value="PRK00068.1"/>
    <property type="match status" value="1"/>
</dbReference>
<dbReference type="NCBIfam" id="NF009097">
    <property type="entry name" value="PRK12438.1"/>
    <property type="match status" value="1"/>
</dbReference>
<dbReference type="PANTHER" id="PTHR39344">
    <property type="entry name" value="UPF0182 PROTEIN SLL1060"/>
    <property type="match status" value="1"/>
</dbReference>
<dbReference type="PANTHER" id="PTHR39344:SF1">
    <property type="entry name" value="UPF0182 PROTEIN SLL1060"/>
    <property type="match status" value="1"/>
</dbReference>
<dbReference type="Pfam" id="PF03699">
    <property type="entry name" value="UPF0182"/>
    <property type="match status" value="1"/>
</dbReference>
<accession>A5TYD5</accession>
<evidence type="ECO:0000255" key="1">
    <source>
        <dbReference type="HAMAP-Rule" id="MF_01600"/>
    </source>
</evidence>
<evidence type="ECO:0000256" key="2">
    <source>
        <dbReference type="SAM" id="MobiDB-lite"/>
    </source>
</evidence>
<sequence>METGSPGKRPVLPKRARLLVTAGMGMLALLLFGPRLVDIYVDWLWFGEVGFRSVWITVLLTRLAIVAAVALVVAGIVLAALLLAYRSRPFFVPDEPQRDPVAPLRSAVMRRPRLFGWGIAVTLGVVCGLIASFDWVKVQLFVHGGTFGIVDPEFGYDIGFFVFDLPFYRSVLNWLFVAVVLAFLASLLTHYLFGGLRLTTGRGMLTQAARVQLAVFAGAVVLLKAVAYWLDRYELLSSGRKEPTFTGAGYTDIHAELPAKLVLVAIAVLCAVSFFTAIFLRDLRIPAMAAALLVLSAILVGGLWPLLMEQFSVRPNAADVERPYIQRNIEATREAYRIGGDWVQYRSYPGIGTKQPRDVPVDVTTIAKVRLLDPHILSRTFTQQQQLKNFFSFAEILDIDRYRIDGELQDYIVGVRELSPKSLTGNQTDWINKHTVYTHGNGFVAAPANRVNAAARDAENISDSNSGYPIYAVSDIASLGSGRQVIPVEQPRVYYGEVIAQADPDYAIVGGAPGSAPREYDTDTSKYTYTGAGGVSIGNWFNRTVFATKVAQHKFLFSREIGSESKVLIHRDPKERVQRVAPWLTTDDNPYPVVVNGRIVWIVDAYTTLDTYPYAQRSSLEGPVTSPTGIVRQGKQVSYVRNSVKATVDAYDGTVTLFQFDRDDPVLRTWMRAFPGTVKSEDQIPDELRAHFRYPEDLFEVQRSLLAKYHVDEPREFFTTNAFWSVPSDPTNNANATQPPFYVLVGDQQSAQPSFRLASAMVGYNREFLSAYISAHSDPANYGKLTVLELPTDTLTQGPQQIQNSMISDTRVASERTLLERSNRIHYGNLLSLPIADGGVLYVEPLYTERISTSPSSSTFPQLSRVLVSVREPRTEGGVRVGYAPTLAESLDQVFGPGTGRVATARGGDAASAPPPGAGGPAPPQAVPPPRTTQPPAAPPRGPDVPPATVAELRETLADLRAVLDRLEKAIDAAETPGG</sequence>
<feature type="chain" id="PRO_0000323477" description="UPF0182 protein MRA_0066">
    <location>
        <begin position="1"/>
        <end position="979"/>
    </location>
</feature>
<feature type="transmembrane region" description="Helical" evidence="1">
    <location>
        <begin position="19"/>
        <end position="39"/>
    </location>
</feature>
<feature type="transmembrane region" description="Helical" evidence="1">
    <location>
        <begin position="63"/>
        <end position="83"/>
    </location>
</feature>
<feature type="transmembrane region" description="Helical" evidence="1">
    <location>
        <begin position="114"/>
        <end position="134"/>
    </location>
</feature>
<feature type="transmembrane region" description="Helical" evidence="1">
    <location>
        <begin position="174"/>
        <end position="194"/>
    </location>
</feature>
<feature type="transmembrane region" description="Helical" evidence="1">
    <location>
        <begin position="211"/>
        <end position="231"/>
    </location>
</feature>
<feature type="transmembrane region" description="Helical" evidence="1">
    <location>
        <begin position="260"/>
        <end position="280"/>
    </location>
</feature>
<feature type="transmembrane region" description="Helical" evidence="1">
    <location>
        <begin position="288"/>
        <end position="308"/>
    </location>
</feature>
<feature type="region of interest" description="Disordered" evidence="2">
    <location>
        <begin position="898"/>
        <end position="948"/>
    </location>
</feature>
<feature type="compositionally biased region" description="Pro residues" evidence="2">
    <location>
        <begin position="913"/>
        <end position="946"/>
    </location>
</feature>